<gene>
    <name evidence="1" type="primary">greA</name>
    <name type="ordered locus">SAUSA300_1567</name>
</gene>
<reference key="1">
    <citation type="journal article" date="2006" name="Lancet">
        <title>Complete genome sequence of USA300, an epidemic clone of community-acquired meticillin-resistant Staphylococcus aureus.</title>
        <authorList>
            <person name="Diep B.A."/>
            <person name="Gill S.R."/>
            <person name="Chang R.F."/>
            <person name="Phan T.H."/>
            <person name="Chen J.H."/>
            <person name="Davidson M.G."/>
            <person name="Lin F."/>
            <person name="Lin J."/>
            <person name="Carleton H.A."/>
            <person name="Mongodin E.F."/>
            <person name="Sensabaugh G.F."/>
            <person name="Perdreau-Remington F."/>
        </authorList>
    </citation>
    <scope>NUCLEOTIDE SEQUENCE [LARGE SCALE GENOMIC DNA]</scope>
    <source>
        <strain>USA300</strain>
    </source>
</reference>
<protein>
    <recommendedName>
        <fullName evidence="1">Transcription elongation factor GreA</fullName>
    </recommendedName>
    <alternativeName>
        <fullName evidence="1">Transcript cleavage factor GreA</fullName>
    </alternativeName>
</protein>
<proteinExistence type="inferred from homology"/>
<dbReference type="EMBL" id="CP000255">
    <property type="protein sequence ID" value="ABD22185.1"/>
    <property type="molecule type" value="Genomic_DNA"/>
</dbReference>
<dbReference type="RefSeq" id="WP_000431312.1">
    <property type="nucleotide sequence ID" value="NZ_CP027476.1"/>
</dbReference>
<dbReference type="SMR" id="Q2FGB6"/>
<dbReference type="KEGG" id="saa:SAUSA300_1567"/>
<dbReference type="HOGENOM" id="CLU_101379_2_1_9"/>
<dbReference type="OMA" id="TWLTQEA"/>
<dbReference type="Proteomes" id="UP000001939">
    <property type="component" value="Chromosome"/>
</dbReference>
<dbReference type="GO" id="GO:0003677">
    <property type="term" value="F:DNA binding"/>
    <property type="evidence" value="ECO:0007669"/>
    <property type="project" value="UniProtKB-UniRule"/>
</dbReference>
<dbReference type="GO" id="GO:0070063">
    <property type="term" value="F:RNA polymerase binding"/>
    <property type="evidence" value="ECO:0007669"/>
    <property type="project" value="InterPro"/>
</dbReference>
<dbReference type="GO" id="GO:0006354">
    <property type="term" value="P:DNA-templated transcription elongation"/>
    <property type="evidence" value="ECO:0007669"/>
    <property type="project" value="TreeGrafter"/>
</dbReference>
<dbReference type="GO" id="GO:0032784">
    <property type="term" value="P:regulation of DNA-templated transcription elongation"/>
    <property type="evidence" value="ECO:0007669"/>
    <property type="project" value="UniProtKB-UniRule"/>
</dbReference>
<dbReference type="FunFam" id="1.10.287.180:FF:000001">
    <property type="entry name" value="Transcription elongation factor GreA"/>
    <property type="match status" value="1"/>
</dbReference>
<dbReference type="FunFam" id="3.10.50.30:FF:000001">
    <property type="entry name" value="Transcription elongation factor GreA"/>
    <property type="match status" value="1"/>
</dbReference>
<dbReference type="Gene3D" id="3.10.50.30">
    <property type="entry name" value="Transcription elongation factor, GreA/GreB, C-terminal domain"/>
    <property type="match status" value="1"/>
</dbReference>
<dbReference type="Gene3D" id="1.10.287.180">
    <property type="entry name" value="Transcription elongation factor, GreA/GreB, N-terminal domain"/>
    <property type="match status" value="1"/>
</dbReference>
<dbReference type="HAMAP" id="MF_00105">
    <property type="entry name" value="GreA_GreB"/>
    <property type="match status" value="1"/>
</dbReference>
<dbReference type="InterPro" id="IPR036953">
    <property type="entry name" value="GreA/GreB_C_sf"/>
</dbReference>
<dbReference type="InterPro" id="IPR018151">
    <property type="entry name" value="TF_GreA/GreB_CS"/>
</dbReference>
<dbReference type="InterPro" id="IPR006359">
    <property type="entry name" value="Tscrpt_elong_fac_GreA"/>
</dbReference>
<dbReference type="InterPro" id="IPR028624">
    <property type="entry name" value="Tscrpt_elong_fac_GreA/B"/>
</dbReference>
<dbReference type="InterPro" id="IPR001437">
    <property type="entry name" value="Tscrpt_elong_fac_GreA/B_C"/>
</dbReference>
<dbReference type="InterPro" id="IPR023459">
    <property type="entry name" value="Tscrpt_elong_fac_GreA/B_fam"/>
</dbReference>
<dbReference type="InterPro" id="IPR022691">
    <property type="entry name" value="Tscrpt_elong_fac_GreA/B_N"/>
</dbReference>
<dbReference type="InterPro" id="IPR036805">
    <property type="entry name" value="Tscrpt_elong_fac_GreA/B_N_sf"/>
</dbReference>
<dbReference type="NCBIfam" id="TIGR01462">
    <property type="entry name" value="greA"/>
    <property type="match status" value="1"/>
</dbReference>
<dbReference type="NCBIfam" id="NF001261">
    <property type="entry name" value="PRK00226.1-2"/>
    <property type="match status" value="1"/>
</dbReference>
<dbReference type="NCBIfam" id="NF001263">
    <property type="entry name" value="PRK00226.1-4"/>
    <property type="match status" value="1"/>
</dbReference>
<dbReference type="PANTHER" id="PTHR30437">
    <property type="entry name" value="TRANSCRIPTION ELONGATION FACTOR GREA"/>
    <property type="match status" value="1"/>
</dbReference>
<dbReference type="PANTHER" id="PTHR30437:SF4">
    <property type="entry name" value="TRANSCRIPTION ELONGATION FACTOR GREA"/>
    <property type="match status" value="1"/>
</dbReference>
<dbReference type="Pfam" id="PF01272">
    <property type="entry name" value="GreA_GreB"/>
    <property type="match status" value="1"/>
</dbReference>
<dbReference type="Pfam" id="PF03449">
    <property type="entry name" value="GreA_GreB_N"/>
    <property type="match status" value="1"/>
</dbReference>
<dbReference type="PIRSF" id="PIRSF006092">
    <property type="entry name" value="GreA_GreB"/>
    <property type="match status" value="1"/>
</dbReference>
<dbReference type="SUPFAM" id="SSF54534">
    <property type="entry name" value="FKBP-like"/>
    <property type="match status" value="1"/>
</dbReference>
<dbReference type="SUPFAM" id="SSF46557">
    <property type="entry name" value="GreA transcript cleavage protein, N-terminal domain"/>
    <property type="match status" value="1"/>
</dbReference>
<dbReference type="PROSITE" id="PS00829">
    <property type="entry name" value="GREAB_1"/>
    <property type="match status" value="1"/>
</dbReference>
<dbReference type="PROSITE" id="PS00830">
    <property type="entry name" value="GREAB_2"/>
    <property type="match status" value="1"/>
</dbReference>
<name>GREA_STAA3</name>
<keyword id="KW-0175">Coiled coil</keyword>
<keyword id="KW-0238">DNA-binding</keyword>
<keyword id="KW-0804">Transcription</keyword>
<keyword id="KW-0805">Transcription regulation</keyword>
<accession>Q2FGB6</accession>
<organism>
    <name type="scientific">Staphylococcus aureus (strain USA300)</name>
    <dbReference type="NCBI Taxonomy" id="367830"/>
    <lineage>
        <taxon>Bacteria</taxon>
        <taxon>Bacillati</taxon>
        <taxon>Bacillota</taxon>
        <taxon>Bacilli</taxon>
        <taxon>Bacillales</taxon>
        <taxon>Staphylococcaceae</taxon>
        <taxon>Staphylococcus</taxon>
    </lineage>
</organism>
<evidence type="ECO:0000255" key="1">
    <source>
        <dbReference type="HAMAP-Rule" id="MF_00105"/>
    </source>
</evidence>
<comment type="function">
    <text evidence="1">Necessary for efficient RNA polymerase transcription elongation past template-encoded arresting sites. The arresting sites in DNA have the property of trapping a certain fraction of elongating RNA polymerases that pass through, resulting in locked ternary complexes. Cleavage of the nascent transcript by cleavage factors such as GreA or GreB allows the resumption of elongation from the new 3'terminus. GreA releases sequences of 2 to 3 nucleotides.</text>
</comment>
<comment type="similarity">
    <text evidence="1">Belongs to the GreA/GreB family.</text>
</comment>
<feature type="chain" id="PRO_1000034298" description="Transcription elongation factor GreA">
    <location>
        <begin position="1"/>
        <end position="158"/>
    </location>
</feature>
<feature type="coiled-coil region" evidence="1">
    <location>
        <begin position="4"/>
        <end position="70"/>
    </location>
</feature>
<sequence length="158" mass="17743">MENQKQYPMTQEGFEKLERELEELKTVKRPEVVEKIKVARSFGDLSENSEYDAAKDEQGFIEQDIQRIEHMLRNALIIEDTGDNNVVKIGKTVTFVELPGDEEESYQIVGSAESDAFNGKISNESPMAKALIGKGLDDEVRVPLPNGGEMNVKIVNIQ</sequence>